<sequence length="389" mass="41760">MAAMMMRQKVAGAIAGERRSAVAPKMGRAATAPVVVASANASAFKGAAVTARVKASTRAARVQSRRTAVLTQAKIGDSLAEFLVEATPDPKLRHVMMSMAEATRTIAHKVRTASCAGTACVNSFGDEQLAVDMVADKLLFEALKYSHVCKLACSEEVPEPVDMGGEGFCVAFDPLDGSSSSDTNFAVGTIFGVWPGDKLTNITGREQVAAGMGIYGPRTVFCIALKDAPGCHEFLLMDDGKWMHVKETTHIGEGKMFAPGNLRATFDNPAYERLINFYLGEKYTLRYTGGIVPDLFQIIVKEKGVFTNLTSPTTKAKLRILFEVAPLALLIEKAGGASSCDGKAVSALDIPILVCDQRTQICYGSIGEVRRFEEYMYGTSPRFSEKVVA</sequence>
<feature type="transit peptide" description="Chloroplast" evidence="2">
    <location>
        <begin position="1"/>
        <end status="unknown"/>
    </location>
</feature>
<feature type="chain" id="PRO_0000008822" description="Sedoheptulose-1,7-bisphosphatase, chloroplastic">
    <location>
        <begin status="unknown"/>
        <end position="389"/>
    </location>
</feature>
<feature type="binding site" evidence="2">
    <location>
        <position position="126"/>
    </location>
    <ligand>
        <name>Mg(2+)</name>
        <dbReference type="ChEBI" id="CHEBI:18420"/>
        <label>1</label>
    </ligand>
</feature>
<feature type="binding site" evidence="2">
    <location>
        <position position="155"/>
    </location>
    <ligand>
        <name>Mg(2+)</name>
        <dbReference type="ChEBI" id="CHEBI:18420"/>
        <label>1</label>
    </ligand>
</feature>
<feature type="binding site" evidence="2">
    <location>
        <position position="155"/>
    </location>
    <ligand>
        <name>Mg(2+)</name>
        <dbReference type="ChEBI" id="CHEBI:18420"/>
        <label>2</label>
    </ligand>
</feature>
<feature type="binding site" evidence="2">
    <location>
        <position position="173"/>
    </location>
    <ligand>
        <name>Mg(2+)</name>
        <dbReference type="ChEBI" id="CHEBI:18420"/>
        <label>2</label>
    </ligand>
</feature>
<feature type="binding site" evidence="2">
    <location>
        <position position="173"/>
    </location>
    <ligand>
        <name>Mg(2+)</name>
        <dbReference type="ChEBI" id="CHEBI:18420"/>
        <label>3</label>
    </ligand>
</feature>
<feature type="binding site" evidence="2">
    <location>
        <position position="175"/>
    </location>
    <ligand>
        <name>Mg(2+)</name>
        <dbReference type="ChEBI" id="CHEBI:18420"/>
        <label>2</label>
    </ligand>
</feature>
<feature type="binding site" evidence="1">
    <location>
        <begin position="176"/>
        <end position="179"/>
    </location>
    <ligand>
        <name>substrate</name>
    </ligand>
</feature>
<feature type="binding site" evidence="2">
    <location>
        <position position="176"/>
    </location>
    <ligand>
        <name>Mg(2+)</name>
        <dbReference type="ChEBI" id="CHEBI:18420"/>
        <label>3</label>
    </ligand>
</feature>
<feature type="binding site" evidence="1">
    <location>
        <position position="287"/>
    </location>
    <ligand>
        <name>substrate</name>
    </ligand>
</feature>
<feature type="binding site" evidence="1">
    <location>
        <position position="317"/>
    </location>
    <ligand>
        <name>substrate</name>
    </ligand>
</feature>
<feature type="binding site" evidence="2">
    <location>
        <position position="323"/>
    </location>
    <ligand>
        <name>Mg(2+)</name>
        <dbReference type="ChEBI" id="CHEBI:18420"/>
        <label>3</label>
    </ligand>
</feature>
<feature type="disulfide bond" description="Redox-active (light-modulated)" evidence="2">
    <location>
        <begin position="115"/>
        <end position="120"/>
    </location>
</feature>
<reference key="1">
    <citation type="journal article" date="1994" name="Plant Physiol.">
        <title>Nucleotide sequence of a cDNA encoding the chloroplast sedoheptulose-1,7-bisphosphatase from Chlamydomonas reinhardtii.</title>
        <authorList>
            <person name="Hahn D."/>
            <person name="Kueck U."/>
        </authorList>
    </citation>
    <scope>NUCLEOTIDE SEQUENCE [MRNA]</scope>
    <source>
        <strain>CC-406</strain>
    </source>
</reference>
<reference key="2">
    <citation type="journal article" date="1996" name="Plant J.">
        <title>Identification of a potential redox-sensitive interdomain disulfide in the sedoheptulose bisphosphatase of Chlamydomonas reinhardtii.</title>
        <authorList>
            <person name="Anderson L.E."/>
            <person name="Huppe H.C."/>
            <person name="Li A.D."/>
            <person name="Stevens F.J."/>
        </authorList>
    </citation>
    <scope>3D-STRUCTURE MODELING OF 66-380</scope>
</reference>
<keyword id="KW-0113">Calvin cycle</keyword>
<keyword id="KW-0119">Carbohydrate metabolism</keyword>
<keyword id="KW-0150">Chloroplast</keyword>
<keyword id="KW-1015">Disulfide bond</keyword>
<keyword id="KW-0378">Hydrolase</keyword>
<keyword id="KW-0460">Magnesium</keyword>
<keyword id="KW-0479">Metal-binding</keyword>
<keyword id="KW-0934">Plastid</keyword>
<keyword id="KW-0809">Transit peptide</keyword>
<protein>
    <recommendedName>
        <fullName>Sedoheptulose-1,7-bisphosphatase, chloroplastic</fullName>
        <ecNumber>3.1.3.37</ecNumber>
    </recommendedName>
    <alternativeName>
        <fullName>SED(1,7)P2ase</fullName>
    </alternativeName>
    <alternativeName>
        <fullName>Sedoheptulose bisphosphatase</fullName>
        <shortName>SBPase</shortName>
    </alternativeName>
</protein>
<proteinExistence type="evidence at transcript level"/>
<dbReference type="EC" id="3.1.3.37"/>
<dbReference type="EMBL" id="X74418">
    <property type="protein sequence ID" value="CAA52439.1"/>
    <property type="molecule type" value="mRNA"/>
</dbReference>
<dbReference type="PIR" id="T08128">
    <property type="entry name" value="T08128"/>
</dbReference>
<dbReference type="SMR" id="P46284"/>
<dbReference type="PaxDb" id="3055-EDP04487"/>
<dbReference type="ProMEX" id="P46284"/>
<dbReference type="eggNOG" id="KOG1458">
    <property type="taxonomic scope" value="Eukaryota"/>
</dbReference>
<dbReference type="BRENDA" id="3.1.3.37">
    <property type="organism ID" value="1318"/>
</dbReference>
<dbReference type="UniPathway" id="UPA00116"/>
<dbReference type="GO" id="GO:0009507">
    <property type="term" value="C:chloroplast"/>
    <property type="evidence" value="ECO:0007669"/>
    <property type="project" value="UniProtKB-SubCell"/>
</dbReference>
<dbReference type="GO" id="GO:0046872">
    <property type="term" value="F:metal ion binding"/>
    <property type="evidence" value="ECO:0007669"/>
    <property type="project" value="UniProtKB-KW"/>
</dbReference>
<dbReference type="GO" id="GO:0050278">
    <property type="term" value="F:sedoheptulose-bisphosphatase activity"/>
    <property type="evidence" value="ECO:0007669"/>
    <property type="project" value="UniProtKB-EC"/>
</dbReference>
<dbReference type="GO" id="GO:0019253">
    <property type="term" value="P:reductive pentose-phosphate cycle"/>
    <property type="evidence" value="ECO:0007669"/>
    <property type="project" value="UniProtKB-UniPathway"/>
</dbReference>
<dbReference type="CDD" id="cd00354">
    <property type="entry name" value="FBPase"/>
    <property type="match status" value="1"/>
</dbReference>
<dbReference type="FunFam" id="3.30.540.10:FF:000010">
    <property type="entry name" value="Sedoheptulose-1,7-bisphosphatase, chloroplastic"/>
    <property type="match status" value="1"/>
</dbReference>
<dbReference type="FunFam" id="3.40.190.80:FF:000008">
    <property type="entry name" value="Sedoheptulose-1,7-bisphosphatase, chloroplastic"/>
    <property type="match status" value="1"/>
</dbReference>
<dbReference type="Gene3D" id="3.40.190.80">
    <property type="match status" value="1"/>
</dbReference>
<dbReference type="Gene3D" id="3.30.540.10">
    <property type="entry name" value="Fructose-1,6-Bisphosphatase, subunit A, domain 1"/>
    <property type="match status" value="1"/>
</dbReference>
<dbReference type="HAMAP" id="MF_01855">
    <property type="entry name" value="FBPase_class1"/>
    <property type="match status" value="1"/>
</dbReference>
<dbReference type="InterPro" id="IPR044015">
    <property type="entry name" value="FBPase_C_dom"/>
</dbReference>
<dbReference type="InterPro" id="IPR000146">
    <property type="entry name" value="FBPase_class-1"/>
</dbReference>
<dbReference type="InterPro" id="IPR033391">
    <property type="entry name" value="FBPase_N"/>
</dbReference>
<dbReference type="InterPro" id="IPR020548">
    <property type="entry name" value="Fructose_bisphosphatase_AS"/>
</dbReference>
<dbReference type="InterPro" id="IPR023079">
    <property type="entry name" value="SBPase"/>
</dbReference>
<dbReference type="PANTHER" id="PTHR11556">
    <property type="entry name" value="FRUCTOSE-1,6-BISPHOSPHATASE-RELATED"/>
    <property type="match status" value="1"/>
</dbReference>
<dbReference type="PANTHER" id="PTHR11556:SF35">
    <property type="entry name" value="SEDOHEPTULOSE-1,7-BISPHOSPHATASE, CHLOROPLASTIC"/>
    <property type="match status" value="1"/>
</dbReference>
<dbReference type="Pfam" id="PF00316">
    <property type="entry name" value="FBPase"/>
    <property type="match status" value="1"/>
</dbReference>
<dbReference type="Pfam" id="PF18913">
    <property type="entry name" value="FBPase_C"/>
    <property type="match status" value="1"/>
</dbReference>
<dbReference type="PRINTS" id="PR01958">
    <property type="entry name" value="S17BPHPHTASE"/>
</dbReference>
<dbReference type="SUPFAM" id="SSF56655">
    <property type="entry name" value="Carbohydrate phosphatase"/>
    <property type="match status" value="1"/>
</dbReference>
<dbReference type="PROSITE" id="PS00124">
    <property type="entry name" value="FBPASE"/>
    <property type="match status" value="1"/>
</dbReference>
<gene>
    <name type="primary">CSBP</name>
</gene>
<accession>P46284</accession>
<name>S17P_CHLRE</name>
<organism>
    <name type="scientific">Chlamydomonas reinhardtii</name>
    <name type="common">Chlamydomonas smithii</name>
    <dbReference type="NCBI Taxonomy" id="3055"/>
    <lineage>
        <taxon>Eukaryota</taxon>
        <taxon>Viridiplantae</taxon>
        <taxon>Chlorophyta</taxon>
        <taxon>core chlorophytes</taxon>
        <taxon>Chlorophyceae</taxon>
        <taxon>CS clade</taxon>
        <taxon>Chlamydomonadales</taxon>
        <taxon>Chlamydomonadaceae</taxon>
        <taxon>Chlamydomonas</taxon>
    </lineage>
</organism>
<evidence type="ECO:0000250" key="1"/>
<evidence type="ECO:0000255" key="2"/>
<evidence type="ECO:0000305" key="3"/>
<comment type="catalytic activity">
    <reaction>
        <text>D-sedoheptulose 1,7-bisphosphate + H2O = D-sedoheptulose 7-phosphate + phosphate</text>
        <dbReference type="Rhea" id="RHEA:17461"/>
        <dbReference type="ChEBI" id="CHEBI:15377"/>
        <dbReference type="ChEBI" id="CHEBI:43474"/>
        <dbReference type="ChEBI" id="CHEBI:57483"/>
        <dbReference type="ChEBI" id="CHEBI:58335"/>
        <dbReference type="EC" id="3.1.3.37"/>
    </reaction>
</comment>
<comment type="cofactor">
    <cofactor evidence="3">
        <name>Mg(2+)</name>
        <dbReference type="ChEBI" id="CHEBI:18420"/>
    </cofactor>
    <text evidence="3">Binds 3 Mg(2+) ions per subunit.</text>
</comment>
<comment type="pathway">
    <text>Carbohydrate biosynthesis; Calvin cycle.</text>
</comment>
<comment type="subunit">
    <text evidence="3">Homodimer.</text>
</comment>
<comment type="subcellular location">
    <subcellularLocation>
        <location>Plastid</location>
        <location>Chloroplast</location>
    </subcellularLocation>
</comment>
<comment type="induction">
    <text evidence="1">Light activation through pH changes, Mg(2+) levels and also by light-modulated reduction of essential disulfide groups via the ferredoxin-thioredoxin f system.</text>
</comment>
<comment type="similarity">
    <text evidence="3">Belongs to the FBPase class 1 family.</text>
</comment>